<sequence length="438" mass="47751">MKKLLPLFVSAALGTLSSAVWAENLAEIYNQAKENDPQLLSVAAQRDAAFEAVTSSRSALLPQINLTAGYNINRSDQAPRESDLLSAGINFSQELYQRSSWVSLDTAEKKARQADSQYAATQQGLILRVAKAYFEVLRAQDNLEFVRAEKAAVGRQLEQTKQRFEVGLSAITDVHDAQAQFDGVLADEVLAENSLTNSYEALREITGQEYSKLAVLDTKRFAASRTTESSEALIEKAQQQNLSLLAARISQDVARDNISLASSGHLPSLTLDGGYNYGNNSNDNAKNTSGEEYNDFKIGVNLKVPLYTGGNTTSLTKQAEFAYVAASQDLEAAYRSVVKDVRAYNNNINASIGALRAYEQAVISAKSALEATEAGFDVGTRTIVDVLDATRRLYDANKNLSNARYDYILSVLQLRQAIGTLSEQDVMDVNAGLKVAKK</sequence>
<evidence type="ECO:0000250" key="1"/>
<evidence type="ECO:0000255" key="2"/>
<evidence type="ECO:0000269" key="3">
    <source>
    </source>
</evidence>
<evidence type="ECO:0000305" key="4"/>
<keyword id="KW-0046">Antibiotic resistance</keyword>
<keyword id="KW-0998">Cell outer membrane</keyword>
<keyword id="KW-0472">Membrane</keyword>
<keyword id="KW-1185">Reference proteome</keyword>
<keyword id="KW-0732">Signal</keyword>
<keyword id="KW-0812">Transmembrane</keyword>
<keyword id="KW-1134">Transmembrane beta strand</keyword>
<keyword id="KW-0813">Transport</keyword>
<keyword id="KW-0843">Virulence</keyword>
<organism>
    <name type="scientific">Vibrio cholerae serotype O1 (strain ATCC 39315 / El Tor Inaba N16961)</name>
    <dbReference type="NCBI Taxonomy" id="243277"/>
    <lineage>
        <taxon>Bacteria</taxon>
        <taxon>Pseudomonadati</taxon>
        <taxon>Pseudomonadota</taxon>
        <taxon>Gammaproteobacteria</taxon>
        <taxon>Vibrionales</taxon>
        <taxon>Vibrionaceae</taxon>
        <taxon>Vibrio</taxon>
    </lineage>
</organism>
<comment type="function">
    <text evidence="1 3">Outer membrane channel, which is required for the function of several efflux systems (By similarity). Required to export RtxA cytotoxin.</text>
</comment>
<comment type="subunit">
    <text evidence="1">Homotrimer. Part of tripartite efflux systems, which are composed of an inner membrane transporter, a periplasmic membrane fusion protein, and an outer membrane component, TolC. The complexes form a large protein conduit and can translocate molecules across both the inner and outer membranes (By similarity).</text>
</comment>
<comment type="subcellular location">
    <subcellularLocation>
        <location evidence="1">Cell outer membrane</location>
        <topology evidence="1">Multi-pass membrane protein</topology>
    </subcellularLocation>
</comment>
<comment type="disruption phenotype">
    <text evidence="3">Increased sensitivity to bile salts and other detergents, erythromycin and novobiocin, but not to chloramphenicol, nalidixic acid, or tetracycline. Highly attenuated in mouse in vivo growth competition assays.</text>
</comment>
<comment type="similarity">
    <text evidence="4">Belongs to the outer membrane factor (OMF) (TC 1.B.17) family.</text>
</comment>
<gene>
    <name type="primary">tolC</name>
    <name type="ordered locus">VC_2436</name>
</gene>
<name>TOLC_VIBCH</name>
<feature type="signal peptide" evidence="2">
    <location>
        <begin position="1"/>
        <end position="22"/>
    </location>
</feature>
<feature type="chain" id="PRO_0000013354" description="Outer membrane protein TolC">
    <location>
        <begin position="23"/>
        <end position="438"/>
    </location>
</feature>
<accession>Q9K2Y1</accession>
<reference key="1">
    <citation type="journal article" date="2001" name="Infect. Immun.">
        <title>Vibrio cholerae tolC is required for bile resistance and colonization.</title>
        <authorList>
            <person name="Bina J.E."/>
            <person name="Mekalanos J.J."/>
        </authorList>
    </citation>
    <scope>NUCLEOTIDE SEQUENCE [GENOMIC DNA]</scope>
    <scope>FUNCTION IN EXPORT</scope>
    <scope>DISRUPTION PHENOTYPE</scope>
    <source>
        <strain>ATCC 39315 / El Tor Inaba N16961</strain>
    </source>
</reference>
<reference key="2">
    <citation type="journal article" date="2000" name="Nature">
        <title>DNA sequence of both chromosomes of the cholera pathogen Vibrio cholerae.</title>
        <authorList>
            <person name="Heidelberg J.F."/>
            <person name="Eisen J.A."/>
            <person name="Nelson W.C."/>
            <person name="Clayton R.A."/>
            <person name="Gwinn M.L."/>
            <person name="Dodson R.J."/>
            <person name="Haft D.H."/>
            <person name="Hickey E.K."/>
            <person name="Peterson J.D."/>
            <person name="Umayam L.A."/>
            <person name="Gill S.R."/>
            <person name="Nelson K.E."/>
            <person name="Read T.D."/>
            <person name="Tettelin H."/>
            <person name="Richardson D.L."/>
            <person name="Ermolaeva M.D."/>
            <person name="Vamathevan J.J."/>
            <person name="Bass S."/>
            <person name="Qin H."/>
            <person name="Dragoi I."/>
            <person name="Sellers P."/>
            <person name="McDonald L.A."/>
            <person name="Utterback T.R."/>
            <person name="Fleischmann R.D."/>
            <person name="Nierman W.C."/>
            <person name="White O."/>
            <person name="Salzberg S.L."/>
            <person name="Smith H.O."/>
            <person name="Colwell R.R."/>
            <person name="Mekalanos J.J."/>
            <person name="Venter J.C."/>
            <person name="Fraser C.M."/>
        </authorList>
    </citation>
    <scope>NUCLEOTIDE SEQUENCE [LARGE SCALE GENOMIC DNA]</scope>
    <source>
        <strain>ATCC 39315 / El Tor Inaba N16961</strain>
    </source>
</reference>
<protein>
    <recommendedName>
        <fullName>Outer membrane protein TolC</fullName>
    </recommendedName>
    <alternativeName>
        <fullName>Multidrug efflux pump subunit TolC</fullName>
    </alternativeName>
</protein>
<proteinExistence type="evidence at protein level"/>
<dbReference type="EMBL" id="AF282892">
    <property type="protein sequence ID" value="AAF91468.1"/>
    <property type="molecule type" value="Genomic_DNA"/>
</dbReference>
<dbReference type="EMBL" id="AE003852">
    <property type="protein sequence ID" value="AAF95579.1"/>
    <property type="molecule type" value="Genomic_DNA"/>
</dbReference>
<dbReference type="PIR" id="B82077">
    <property type="entry name" value="B82077"/>
</dbReference>
<dbReference type="RefSeq" id="NP_232066.1">
    <property type="nucleotide sequence ID" value="NC_002505.1"/>
</dbReference>
<dbReference type="RefSeq" id="WP_000735329.1">
    <property type="nucleotide sequence ID" value="NZ_LT906614.1"/>
</dbReference>
<dbReference type="SMR" id="Q9K2Y1"/>
<dbReference type="STRING" id="243277.VC_2436"/>
<dbReference type="TCDB" id="2.A.6.2.30">
    <property type="family name" value="the resistance-nodulation-cell division (rnd) superfamily"/>
</dbReference>
<dbReference type="DNASU" id="2612978"/>
<dbReference type="EnsemblBacteria" id="AAF95579">
    <property type="protein sequence ID" value="AAF95579"/>
    <property type="gene ID" value="VC_2436"/>
</dbReference>
<dbReference type="KEGG" id="vch:VC_2436"/>
<dbReference type="PATRIC" id="fig|243277.26.peg.2320"/>
<dbReference type="eggNOG" id="COG1538">
    <property type="taxonomic scope" value="Bacteria"/>
</dbReference>
<dbReference type="HOGENOM" id="CLU_012817_0_2_6"/>
<dbReference type="BioCyc" id="MetaCyc:FY484_RS12115-MONOMER"/>
<dbReference type="Proteomes" id="UP000000584">
    <property type="component" value="Chromosome 1"/>
</dbReference>
<dbReference type="GO" id="GO:0009279">
    <property type="term" value="C:cell outer membrane"/>
    <property type="evidence" value="ECO:0007669"/>
    <property type="project" value="UniProtKB-SubCell"/>
</dbReference>
<dbReference type="GO" id="GO:1990281">
    <property type="term" value="C:efflux pump complex"/>
    <property type="evidence" value="ECO:0000318"/>
    <property type="project" value="GO_Central"/>
</dbReference>
<dbReference type="GO" id="GO:0015562">
    <property type="term" value="F:efflux transmembrane transporter activity"/>
    <property type="evidence" value="ECO:0000318"/>
    <property type="project" value="GO_Central"/>
</dbReference>
<dbReference type="GO" id="GO:0015288">
    <property type="term" value="F:porin activity"/>
    <property type="evidence" value="ECO:0000318"/>
    <property type="project" value="GO_Central"/>
</dbReference>
<dbReference type="GO" id="GO:0046677">
    <property type="term" value="P:response to antibiotic"/>
    <property type="evidence" value="ECO:0007669"/>
    <property type="project" value="UniProtKB-KW"/>
</dbReference>
<dbReference type="FunFam" id="1.20.1600.10:FF:000001">
    <property type="entry name" value="TolC outer membrane channel"/>
    <property type="match status" value="1"/>
</dbReference>
<dbReference type="Gene3D" id="1.20.1600.10">
    <property type="entry name" value="Outer membrane efflux proteins (OEP)"/>
    <property type="match status" value="1"/>
</dbReference>
<dbReference type="InterPro" id="IPR051906">
    <property type="entry name" value="Bacterial_OMF"/>
</dbReference>
<dbReference type="InterPro" id="IPR003423">
    <property type="entry name" value="OMP_efflux"/>
</dbReference>
<dbReference type="InterPro" id="IPR010130">
    <property type="entry name" value="T1SS_OMP_TolC"/>
</dbReference>
<dbReference type="NCBIfam" id="NF007002">
    <property type="entry name" value="PRK09465.1"/>
    <property type="match status" value="1"/>
</dbReference>
<dbReference type="NCBIfam" id="TIGR01844">
    <property type="entry name" value="type_I_sec_TolC"/>
    <property type="match status" value="1"/>
</dbReference>
<dbReference type="PANTHER" id="PTHR30026">
    <property type="entry name" value="OUTER MEMBRANE PROTEIN TOLC"/>
    <property type="match status" value="1"/>
</dbReference>
<dbReference type="PANTHER" id="PTHR30026:SF20">
    <property type="entry name" value="OUTER MEMBRANE PROTEIN TOLC"/>
    <property type="match status" value="1"/>
</dbReference>
<dbReference type="Pfam" id="PF02321">
    <property type="entry name" value="OEP"/>
    <property type="match status" value="2"/>
</dbReference>
<dbReference type="SUPFAM" id="SSF56954">
    <property type="entry name" value="Outer membrane efflux proteins (OEP)"/>
    <property type="match status" value="1"/>
</dbReference>